<protein>
    <recommendedName>
        <fullName>Probable cytochrome c oxidase subunit 2</fullName>
        <ecNumber>7.1.1.9</ecNumber>
    </recommendedName>
    <alternativeName>
        <fullName>Cytochrome aa3 subunit 2</fullName>
    </alternativeName>
    <alternativeName>
        <fullName>Cytochrome c oxidase polypeptide II</fullName>
    </alternativeName>
</protein>
<evidence type="ECO:0000250" key="1"/>
<evidence type="ECO:0000255" key="2"/>
<evidence type="ECO:0000305" key="3"/>
<accession>Q82AL0</accession>
<keyword id="KW-1003">Cell membrane</keyword>
<keyword id="KW-0186">Copper</keyword>
<keyword id="KW-0249">Electron transport</keyword>
<keyword id="KW-0472">Membrane</keyword>
<keyword id="KW-0479">Metal-binding</keyword>
<keyword id="KW-1185">Reference proteome</keyword>
<keyword id="KW-0679">Respiratory chain</keyword>
<keyword id="KW-0732">Signal</keyword>
<keyword id="KW-1278">Translocase</keyword>
<keyword id="KW-0812">Transmembrane</keyword>
<keyword id="KW-1133">Transmembrane helix</keyword>
<keyword id="KW-0813">Transport</keyword>
<proteinExistence type="inferred from homology"/>
<dbReference type="EC" id="7.1.1.9"/>
<dbReference type="EMBL" id="BA000030">
    <property type="protein sequence ID" value="BAC73758.1"/>
    <property type="molecule type" value="Genomic_DNA"/>
</dbReference>
<dbReference type="SMR" id="Q82AL0"/>
<dbReference type="GeneID" id="41543124"/>
<dbReference type="KEGG" id="sma:SAVERM_6047"/>
<dbReference type="eggNOG" id="COG1622">
    <property type="taxonomic scope" value="Bacteria"/>
</dbReference>
<dbReference type="HOGENOM" id="CLU_036876_3_0_11"/>
<dbReference type="OrthoDB" id="9781261at2"/>
<dbReference type="Proteomes" id="UP000000428">
    <property type="component" value="Chromosome"/>
</dbReference>
<dbReference type="GO" id="GO:0005886">
    <property type="term" value="C:plasma membrane"/>
    <property type="evidence" value="ECO:0007669"/>
    <property type="project" value="UniProtKB-SubCell"/>
</dbReference>
<dbReference type="GO" id="GO:0005507">
    <property type="term" value="F:copper ion binding"/>
    <property type="evidence" value="ECO:0007669"/>
    <property type="project" value="InterPro"/>
</dbReference>
<dbReference type="GO" id="GO:0004129">
    <property type="term" value="F:cytochrome-c oxidase activity"/>
    <property type="evidence" value="ECO:0007669"/>
    <property type="project" value="UniProtKB-EC"/>
</dbReference>
<dbReference type="GO" id="GO:0042773">
    <property type="term" value="P:ATP synthesis coupled electron transport"/>
    <property type="evidence" value="ECO:0007669"/>
    <property type="project" value="TreeGrafter"/>
</dbReference>
<dbReference type="CDD" id="cd13919">
    <property type="entry name" value="CuRO_HCO_II_like_5"/>
    <property type="match status" value="1"/>
</dbReference>
<dbReference type="FunFam" id="1.10.287.90:FF:000003">
    <property type="entry name" value="Cytochrome C oxidase subunit II"/>
    <property type="match status" value="1"/>
</dbReference>
<dbReference type="Gene3D" id="1.10.287.90">
    <property type="match status" value="1"/>
</dbReference>
<dbReference type="Gene3D" id="2.60.40.420">
    <property type="entry name" value="Cupredoxins - blue copper proteins"/>
    <property type="match status" value="1"/>
</dbReference>
<dbReference type="InterPro" id="IPR045187">
    <property type="entry name" value="CcO_II"/>
</dbReference>
<dbReference type="InterPro" id="IPR002429">
    <property type="entry name" value="CcO_II-like_C"/>
</dbReference>
<dbReference type="InterPro" id="IPR001505">
    <property type="entry name" value="Copper_CuA"/>
</dbReference>
<dbReference type="InterPro" id="IPR008972">
    <property type="entry name" value="Cupredoxin"/>
</dbReference>
<dbReference type="InterPro" id="IPR014222">
    <property type="entry name" value="Cyt_c_oxidase_su2"/>
</dbReference>
<dbReference type="InterPro" id="IPR036257">
    <property type="entry name" value="Cyt_c_oxidase_su2_TM_sf"/>
</dbReference>
<dbReference type="NCBIfam" id="TIGR02866">
    <property type="entry name" value="CoxB"/>
    <property type="match status" value="1"/>
</dbReference>
<dbReference type="PANTHER" id="PTHR22888:SF9">
    <property type="entry name" value="CYTOCHROME C OXIDASE SUBUNIT 2"/>
    <property type="match status" value="1"/>
</dbReference>
<dbReference type="PANTHER" id="PTHR22888">
    <property type="entry name" value="CYTOCHROME C OXIDASE, SUBUNIT II"/>
    <property type="match status" value="1"/>
</dbReference>
<dbReference type="Pfam" id="PF00116">
    <property type="entry name" value="COX2"/>
    <property type="match status" value="1"/>
</dbReference>
<dbReference type="PRINTS" id="PR01166">
    <property type="entry name" value="CYCOXIDASEII"/>
</dbReference>
<dbReference type="SUPFAM" id="SSF49503">
    <property type="entry name" value="Cupredoxins"/>
    <property type="match status" value="1"/>
</dbReference>
<dbReference type="SUPFAM" id="SSF81464">
    <property type="entry name" value="Cytochrome c oxidase subunit II-like, transmembrane region"/>
    <property type="match status" value="1"/>
</dbReference>
<dbReference type="PROSITE" id="PS00078">
    <property type="entry name" value="COX2"/>
    <property type="match status" value="1"/>
</dbReference>
<dbReference type="PROSITE" id="PS50857">
    <property type="entry name" value="COX2_CUA"/>
    <property type="match status" value="1"/>
</dbReference>
<organism>
    <name type="scientific">Streptomyces avermitilis (strain ATCC 31267 / DSM 46492 / JCM 5070 / NBRC 14893 / NCIMB 12804 / NRRL 8165 / MA-4680)</name>
    <dbReference type="NCBI Taxonomy" id="227882"/>
    <lineage>
        <taxon>Bacteria</taxon>
        <taxon>Bacillati</taxon>
        <taxon>Actinomycetota</taxon>
        <taxon>Actinomycetes</taxon>
        <taxon>Kitasatosporales</taxon>
        <taxon>Streptomycetaceae</taxon>
        <taxon>Streptomyces</taxon>
    </lineage>
</organism>
<sequence>MSPNGSDRSPRRPMRRKLLQALTAGLVLATATGCTYKDFPRLGMPTPVTEEAPRILSLWQGSWAAALATGVLVWGLILWATIFHRRSRTKVEVPPQTRYNMPIEALYTVVPLIIVSVLFYFTARDESKLLDLSKKPDVTVNVVGFQWSWGFNYIENVDGSTGNAKTDKNLAAIPDRFKEAFPANAGGVYDVGTPGTRNPQTNNPGPTLWLPKGKTVRFVLTSRDVIHSFWVVPFLMKQDVIPGHTNSFQVTPNREGTFLGKCAELCGVDHSRMLFNVKVVSPERYQQHLKDLAKKGQTGYVPAGIAQTSHEKNRETNNL</sequence>
<comment type="function">
    <text evidence="1">Subunits I and II form the functional core of the enzyme complex. Electrons originating in cytochrome c are transferred via heme a and Cu(A) to the binuclear center formed by heme a3 and Cu(B) (By similarity).</text>
</comment>
<comment type="catalytic activity">
    <reaction>
        <text>4 Fe(II)-[cytochrome c] + O2 + 8 H(+)(in) = 4 Fe(III)-[cytochrome c] + 2 H2O + 4 H(+)(out)</text>
        <dbReference type="Rhea" id="RHEA:11436"/>
        <dbReference type="Rhea" id="RHEA-COMP:10350"/>
        <dbReference type="Rhea" id="RHEA-COMP:14399"/>
        <dbReference type="ChEBI" id="CHEBI:15377"/>
        <dbReference type="ChEBI" id="CHEBI:15378"/>
        <dbReference type="ChEBI" id="CHEBI:15379"/>
        <dbReference type="ChEBI" id="CHEBI:29033"/>
        <dbReference type="ChEBI" id="CHEBI:29034"/>
        <dbReference type="EC" id="7.1.1.9"/>
    </reaction>
</comment>
<comment type="cofactor">
    <cofactor evidence="1">
        <name>Cu cation</name>
        <dbReference type="ChEBI" id="CHEBI:23378"/>
    </cofactor>
    <text evidence="1">Binds a copper A center.</text>
</comment>
<comment type="cofactor">
    <cofactor evidence="1">
        <name>heme</name>
        <dbReference type="ChEBI" id="CHEBI:30413"/>
    </cofactor>
</comment>
<comment type="subcellular location">
    <subcellularLocation>
        <location evidence="3">Cell membrane</location>
        <topology evidence="3">Multi-pass membrane protein</topology>
    </subcellularLocation>
</comment>
<comment type="similarity">
    <text evidence="3">Belongs to the cytochrome c oxidase subunit 2 family.</text>
</comment>
<feature type="signal peptide" evidence="2">
    <location>
        <begin position="1"/>
        <end position="33"/>
    </location>
</feature>
<feature type="chain" id="PRO_0000006062" description="Probable cytochrome c oxidase subunit 2">
    <location>
        <begin position="34"/>
        <end position="319"/>
    </location>
</feature>
<feature type="transmembrane region" description="Helical" evidence="2">
    <location>
        <begin position="63"/>
        <end position="83"/>
    </location>
</feature>
<feature type="transmembrane region" description="Helical" evidence="2">
    <location>
        <begin position="101"/>
        <end position="121"/>
    </location>
</feature>
<feature type="binding site" evidence="2">
    <location>
        <position position="227"/>
    </location>
    <ligand>
        <name>Cu cation</name>
        <dbReference type="ChEBI" id="CHEBI:23378"/>
        <label>A</label>
    </ligand>
</feature>
<feature type="binding site" evidence="2">
    <location>
        <position position="262"/>
    </location>
    <ligand>
        <name>Cu cation</name>
        <dbReference type="ChEBI" id="CHEBI:23378"/>
        <label>A</label>
    </ligand>
</feature>
<feature type="binding site" evidence="2">
    <location>
        <position position="266"/>
    </location>
    <ligand>
        <name>Cu cation</name>
        <dbReference type="ChEBI" id="CHEBI:23378"/>
        <label>A</label>
    </ligand>
</feature>
<feature type="binding site" evidence="2">
    <location>
        <position position="270"/>
    </location>
    <ligand>
        <name>Cu cation</name>
        <dbReference type="ChEBI" id="CHEBI:23378"/>
        <label>A</label>
    </ligand>
</feature>
<reference key="1">
    <citation type="journal article" date="2001" name="Proc. Natl. Acad. Sci. U.S.A.">
        <title>Genome sequence of an industrial microorganism Streptomyces avermitilis: deducing the ability of producing secondary metabolites.</title>
        <authorList>
            <person name="Omura S."/>
            <person name="Ikeda H."/>
            <person name="Ishikawa J."/>
            <person name="Hanamoto A."/>
            <person name="Takahashi C."/>
            <person name="Shinose M."/>
            <person name="Takahashi Y."/>
            <person name="Horikawa H."/>
            <person name="Nakazawa H."/>
            <person name="Osonoe T."/>
            <person name="Kikuchi H."/>
            <person name="Shiba T."/>
            <person name="Sakaki Y."/>
            <person name="Hattori M."/>
        </authorList>
    </citation>
    <scope>NUCLEOTIDE SEQUENCE [LARGE SCALE GENOMIC DNA]</scope>
    <source>
        <strain>ATCC 31267 / DSM 46492 / JCM 5070 / NBRC 14893 / NCIMB 12804 / NRRL 8165 / MA-4680</strain>
    </source>
</reference>
<reference key="2">
    <citation type="journal article" date="2003" name="Nat. Biotechnol.">
        <title>Complete genome sequence and comparative analysis of the industrial microorganism Streptomyces avermitilis.</title>
        <authorList>
            <person name="Ikeda H."/>
            <person name="Ishikawa J."/>
            <person name="Hanamoto A."/>
            <person name="Shinose M."/>
            <person name="Kikuchi H."/>
            <person name="Shiba T."/>
            <person name="Sakaki Y."/>
            <person name="Hattori M."/>
            <person name="Omura S."/>
        </authorList>
    </citation>
    <scope>NUCLEOTIDE SEQUENCE [LARGE SCALE GENOMIC DNA]</scope>
    <source>
        <strain>ATCC 31267 / DSM 46492 / JCM 5070 / NBRC 14893 / NCIMB 12804 / NRRL 8165 / MA-4680</strain>
    </source>
</reference>
<name>COX2_STRAW</name>
<gene>
    <name type="primary">ctaC</name>
    <name type="ordered locus">SAV_6047</name>
</gene>